<evidence type="ECO:0000255" key="1">
    <source>
        <dbReference type="HAMAP-Rule" id="MF_00191"/>
    </source>
</evidence>
<dbReference type="EC" id="1.17.7.4" evidence="1"/>
<dbReference type="EMBL" id="CP000569">
    <property type="protein sequence ID" value="ABN74604.1"/>
    <property type="molecule type" value="Genomic_DNA"/>
</dbReference>
<dbReference type="RefSeq" id="WP_009875235.1">
    <property type="nucleotide sequence ID" value="NC_009053.1"/>
</dbReference>
<dbReference type="SMR" id="A3N2G8"/>
<dbReference type="STRING" id="416269.APL_1520"/>
<dbReference type="EnsemblBacteria" id="ABN74604">
    <property type="protein sequence ID" value="ABN74604"/>
    <property type="gene ID" value="APL_1520"/>
</dbReference>
<dbReference type="KEGG" id="apl:APL_1520"/>
<dbReference type="PATRIC" id="fig|416269.6.peg.1581"/>
<dbReference type="eggNOG" id="COG0761">
    <property type="taxonomic scope" value="Bacteria"/>
</dbReference>
<dbReference type="HOGENOM" id="CLU_027486_1_0_6"/>
<dbReference type="UniPathway" id="UPA00056">
    <property type="reaction ID" value="UER00097"/>
</dbReference>
<dbReference type="UniPathway" id="UPA00059">
    <property type="reaction ID" value="UER00105"/>
</dbReference>
<dbReference type="Proteomes" id="UP000001432">
    <property type="component" value="Chromosome"/>
</dbReference>
<dbReference type="GO" id="GO:0051539">
    <property type="term" value="F:4 iron, 4 sulfur cluster binding"/>
    <property type="evidence" value="ECO:0007669"/>
    <property type="project" value="UniProtKB-UniRule"/>
</dbReference>
<dbReference type="GO" id="GO:0051745">
    <property type="term" value="F:4-hydroxy-3-methylbut-2-enyl diphosphate reductase activity"/>
    <property type="evidence" value="ECO:0007669"/>
    <property type="project" value="UniProtKB-UniRule"/>
</dbReference>
<dbReference type="GO" id="GO:0046872">
    <property type="term" value="F:metal ion binding"/>
    <property type="evidence" value="ECO:0007669"/>
    <property type="project" value="UniProtKB-KW"/>
</dbReference>
<dbReference type="GO" id="GO:0050992">
    <property type="term" value="P:dimethylallyl diphosphate biosynthetic process"/>
    <property type="evidence" value="ECO:0007669"/>
    <property type="project" value="UniProtKB-UniRule"/>
</dbReference>
<dbReference type="GO" id="GO:0019288">
    <property type="term" value="P:isopentenyl diphosphate biosynthetic process, methylerythritol 4-phosphate pathway"/>
    <property type="evidence" value="ECO:0007669"/>
    <property type="project" value="UniProtKB-UniRule"/>
</dbReference>
<dbReference type="GO" id="GO:0016114">
    <property type="term" value="P:terpenoid biosynthetic process"/>
    <property type="evidence" value="ECO:0007669"/>
    <property type="project" value="UniProtKB-UniRule"/>
</dbReference>
<dbReference type="CDD" id="cd13944">
    <property type="entry name" value="lytB_ispH"/>
    <property type="match status" value="1"/>
</dbReference>
<dbReference type="Gene3D" id="3.40.50.11270">
    <property type="match status" value="1"/>
</dbReference>
<dbReference type="Gene3D" id="3.40.1010.20">
    <property type="entry name" value="4-hydroxy-3-methylbut-2-enyl diphosphate reductase, catalytic domain"/>
    <property type="match status" value="2"/>
</dbReference>
<dbReference type="HAMAP" id="MF_00191">
    <property type="entry name" value="IspH"/>
    <property type="match status" value="1"/>
</dbReference>
<dbReference type="InterPro" id="IPR003451">
    <property type="entry name" value="LytB/IspH"/>
</dbReference>
<dbReference type="NCBIfam" id="TIGR00216">
    <property type="entry name" value="ispH_lytB"/>
    <property type="match status" value="1"/>
</dbReference>
<dbReference type="NCBIfam" id="NF002188">
    <property type="entry name" value="PRK01045.1-2"/>
    <property type="match status" value="1"/>
</dbReference>
<dbReference type="NCBIfam" id="NF002190">
    <property type="entry name" value="PRK01045.1-4"/>
    <property type="match status" value="1"/>
</dbReference>
<dbReference type="PANTHER" id="PTHR30426">
    <property type="entry name" value="4-HYDROXY-3-METHYLBUT-2-ENYL DIPHOSPHATE REDUCTASE"/>
    <property type="match status" value="1"/>
</dbReference>
<dbReference type="PANTHER" id="PTHR30426:SF0">
    <property type="entry name" value="4-HYDROXY-3-METHYLBUT-2-ENYL DIPHOSPHATE REDUCTASE"/>
    <property type="match status" value="1"/>
</dbReference>
<dbReference type="Pfam" id="PF02401">
    <property type="entry name" value="LYTB"/>
    <property type="match status" value="1"/>
</dbReference>
<feature type="chain" id="PRO_1000021079" description="4-hydroxy-3-methylbut-2-enyl diphosphate reductase">
    <location>
        <begin position="1"/>
        <end position="314"/>
    </location>
</feature>
<feature type="active site" description="Proton donor" evidence="1">
    <location>
        <position position="126"/>
    </location>
</feature>
<feature type="binding site" evidence="1">
    <location>
        <position position="12"/>
    </location>
    <ligand>
        <name>[4Fe-4S] cluster</name>
        <dbReference type="ChEBI" id="CHEBI:49883"/>
    </ligand>
</feature>
<feature type="binding site" evidence="1">
    <location>
        <position position="41"/>
    </location>
    <ligand>
        <name>(2E)-4-hydroxy-3-methylbut-2-enyl diphosphate</name>
        <dbReference type="ChEBI" id="CHEBI:128753"/>
    </ligand>
</feature>
<feature type="binding site" evidence="1">
    <location>
        <position position="41"/>
    </location>
    <ligand>
        <name>dimethylallyl diphosphate</name>
        <dbReference type="ChEBI" id="CHEBI:57623"/>
    </ligand>
</feature>
<feature type="binding site" evidence="1">
    <location>
        <position position="41"/>
    </location>
    <ligand>
        <name>isopentenyl diphosphate</name>
        <dbReference type="ChEBI" id="CHEBI:128769"/>
    </ligand>
</feature>
<feature type="binding site" evidence="1">
    <location>
        <position position="74"/>
    </location>
    <ligand>
        <name>(2E)-4-hydroxy-3-methylbut-2-enyl diphosphate</name>
        <dbReference type="ChEBI" id="CHEBI:128753"/>
    </ligand>
</feature>
<feature type="binding site" evidence="1">
    <location>
        <position position="74"/>
    </location>
    <ligand>
        <name>dimethylallyl diphosphate</name>
        <dbReference type="ChEBI" id="CHEBI:57623"/>
    </ligand>
</feature>
<feature type="binding site" evidence="1">
    <location>
        <position position="74"/>
    </location>
    <ligand>
        <name>isopentenyl diphosphate</name>
        <dbReference type="ChEBI" id="CHEBI:128769"/>
    </ligand>
</feature>
<feature type="binding site" evidence="1">
    <location>
        <position position="96"/>
    </location>
    <ligand>
        <name>[4Fe-4S] cluster</name>
        <dbReference type="ChEBI" id="CHEBI:49883"/>
    </ligand>
</feature>
<feature type="binding site" evidence="1">
    <location>
        <position position="124"/>
    </location>
    <ligand>
        <name>(2E)-4-hydroxy-3-methylbut-2-enyl diphosphate</name>
        <dbReference type="ChEBI" id="CHEBI:128753"/>
    </ligand>
</feature>
<feature type="binding site" evidence="1">
    <location>
        <position position="124"/>
    </location>
    <ligand>
        <name>dimethylallyl diphosphate</name>
        <dbReference type="ChEBI" id="CHEBI:57623"/>
    </ligand>
</feature>
<feature type="binding site" evidence="1">
    <location>
        <position position="124"/>
    </location>
    <ligand>
        <name>isopentenyl diphosphate</name>
        <dbReference type="ChEBI" id="CHEBI:128769"/>
    </ligand>
</feature>
<feature type="binding site" evidence="1">
    <location>
        <position position="167"/>
    </location>
    <ligand>
        <name>(2E)-4-hydroxy-3-methylbut-2-enyl diphosphate</name>
        <dbReference type="ChEBI" id="CHEBI:128753"/>
    </ligand>
</feature>
<feature type="binding site" evidence="1">
    <location>
        <position position="197"/>
    </location>
    <ligand>
        <name>[4Fe-4S] cluster</name>
        <dbReference type="ChEBI" id="CHEBI:49883"/>
    </ligand>
</feature>
<feature type="binding site" evidence="1">
    <location>
        <position position="225"/>
    </location>
    <ligand>
        <name>(2E)-4-hydroxy-3-methylbut-2-enyl diphosphate</name>
        <dbReference type="ChEBI" id="CHEBI:128753"/>
    </ligand>
</feature>
<feature type="binding site" evidence="1">
    <location>
        <position position="225"/>
    </location>
    <ligand>
        <name>dimethylallyl diphosphate</name>
        <dbReference type="ChEBI" id="CHEBI:57623"/>
    </ligand>
</feature>
<feature type="binding site" evidence="1">
    <location>
        <position position="225"/>
    </location>
    <ligand>
        <name>isopentenyl diphosphate</name>
        <dbReference type="ChEBI" id="CHEBI:128769"/>
    </ligand>
</feature>
<feature type="binding site" evidence="1">
    <location>
        <position position="226"/>
    </location>
    <ligand>
        <name>(2E)-4-hydroxy-3-methylbut-2-enyl diphosphate</name>
        <dbReference type="ChEBI" id="CHEBI:128753"/>
    </ligand>
</feature>
<feature type="binding site" evidence="1">
    <location>
        <position position="226"/>
    </location>
    <ligand>
        <name>dimethylallyl diphosphate</name>
        <dbReference type="ChEBI" id="CHEBI:57623"/>
    </ligand>
</feature>
<feature type="binding site" evidence="1">
    <location>
        <position position="226"/>
    </location>
    <ligand>
        <name>isopentenyl diphosphate</name>
        <dbReference type="ChEBI" id="CHEBI:128769"/>
    </ligand>
</feature>
<feature type="binding site" evidence="1">
    <location>
        <position position="227"/>
    </location>
    <ligand>
        <name>(2E)-4-hydroxy-3-methylbut-2-enyl diphosphate</name>
        <dbReference type="ChEBI" id="CHEBI:128753"/>
    </ligand>
</feature>
<feature type="binding site" evidence="1">
    <location>
        <position position="227"/>
    </location>
    <ligand>
        <name>dimethylallyl diphosphate</name>
        <dbReference type="ChEBI" id="CHEBI:57623"/>
    </ligand>
</feature>
<feature type="binding site" evidence="1">
    <location>
        <position position="227"/>
    </location>
    <ligand>
        <name>isopentenyl diphosphate</name>
        <dbReference type="ChEBI" id="CHEBI:128769"/>
    </ligand>
</feature>
<feature type="binding site" evidence="1">
    <location>
        <position position="269"/>
    </location>
    <ligand>
        <name>(2E)-4-hydroxy-3-methylbut-2-enyl diphosphate</name>
        <dbReference type="ChEBI" id="CHEBI:128753"/>
    </ligand>
</feature>
<feature type="binding site" evidence="1">
    <location>
        <position position="269"/>
    </location>
    <ligand>
        <name>dimethylallyl diphosphate</name>
        <dbReference type="ChEBI" id="CHEBI:57623"/>
    </ligand>
</feature>
<feature type="binding site" evidence="1">
    <location>
        <position position="269"/>
    </location>
    <ligand>
        <name>isopentenyl diphosphate</name>
        <dbReference type="ChEBI" id="CHEBI:128769"/>
    </ligand>
</feature>
<protein>
    <recommendedName>
        <fullName evidence="1">4-hydroxy-3-methylbut-2-enyl diphosphate reductase</fullName>
        <shortName evidence="1">HMBPP reductase</shortName>
        <ecNumber evidence="1">1.17.7.4</ecNumber>
    </recommendedName>
</protein>
<comment type="function">
    <text evidence="1">Catalyzes the conversion of 1-hydroxy-2-methyl-2-(E)-butenyl 4-diphosphate (HMBPP) into a mixture of isopentenyl diphosphate (IPP) and dimethylallyl diphosphate (DMAPP). Acts in the terminal step of the DOXP/MEP pathway for isoprenoid precursor biosynthesis.</text>
</comment>
<comment type="catalytic activity">
    <reaction evidence="1">
        <text>isopentenyl diphosphate + 2 oxidized [2Fe-2S]-[ferredoxin] + H2O = (2E)-4-hydroxy-3-methylbut-2-enyl diphosphate + 2 reduced [2Fe-2S]-[ferredoxin] + 2 H(+)</text>
        <dbReference type="Rhea" id="RHEA:24488"/>
        <dbReference type="Rhea" id="RHEA-COMP:10000"/>
        <dbReference type="Rhea" id="RHEA-COMP:10001"/>
        <dbReference type="ChEBI" id="CHEBI:15377"/>
        <dbReference type="ChEBI" id="CHEBI:15378"/>
        <dbReference type="ChEBI" id="CHEBI:33737"/>
        <dbReference type="ChEBI" id="CHEBI:33738"/>
        <dbReference type="ChEBI" id="CHEBI:128753"/>
        <dbReference type="ChEBI" id="CHEBI:128769"/>
        <dbReference type="EC" id="1.17.7.4"/>
    </reaction>
</comment>
<comment type="catalytic activity">
    <reaction evidence="1">
        <text>dimethylallyl diphosphate + 2 oxidized [2Fe-2S]-[ferredoxin] + H2O = (2E)-4-hydroxy-3-methylbut-2-enyl diphosphate + 2 reduced [2Fe-2S]-[ferredoxin] + 2 H(+)</text>
        <dbReference type="Rhea" id="RHEA:24825"/>
        <dbReference type="Rhea" id="RHEA-COMP:10000"/>
        <dbReference type="Rhea" id="RHEA-COMP:10001"/>
        <dbReference type="ChEBI" id="CHEBI:15377"/>
        <dbReference type="ChEBI" id="CHEBI:15378"/>
        <dbReference type="ChEBI" id="CHEBI:33737"/>
        <dbReference type="ChEBI" id="CHEBI:33738"/>
        <dbReference type="ChEBI" id="CHEBI:57623"/>
        <dbReference type="ChEBI" id="CHEBI:128753"/>
        <dbReference type="EC" id="1.17.7.4"/>
    </reaction>
</comment>
<comment type="cofactor">
    <cofactor evidence="1">
        <name>[4Fe-4S] cluster</name>
        <dbReference type="ChEBI" id="CHEBI:49883"/>
    </cofactor>
    <text evidence="1">Binds 1 [4Fe-4S] cluster per subunit.</text>
</comment>
<comment type="pathway">
    <text evidence="1">Isoprenoid biosynthesis; dimethylallyl diphosphate biosynthesis; dimethylallyl diphosphate from (2E)-4-hydroxy-3-methylbutenyl diphosphate: step 1/1.</text>
</comment>
<comment type="pathway">
    <text evidence="1">Isoprenoid biosynthesis; isopentenyl diphosphate biosynthesis via DXP pathway; isopentenyl diphosphate from 1-deoxy-D-xylulose 5-phosphate: step 6/6.</text>
</comment>
<comment type="similarity">
    <text evidence="1">Belongs to the IspH family.</text>
</comment>
<gene>
    <name evidence="1" type="primary">ispH</name>
    <name type="ordered locus">APL_1520</name>
</gene>
<organism>
    <name type="scientific">Actinobacillus pleuropneumoniae serotype 5b (strain L20)</name>
    <dbReference type="NCBI Taxonomy" id="416269"/>
    <lineage>
        <taxon>Bacteria</taxon>
        <taxon>Pseudomonadati</taxon>
        <taxon>Pseudomonadota</taxon>
        <taxon>Gammaproteobacteria</taxon>
        <taxon>Pasteurellales</taxon>
        <taxon>Pasteurellaceae</taxon>
        <taxon>Actinobacillus</taxon>
    </lineage>
</organism>
<proteinExistence type="inferred from homology"/>
<reference key="1">
    <citation type="journal article" date="2008" name="J. Bacteriol.">
        <title>The complete genome sequence of Actinobacillus pleuropneumoniae L20 (serotype 5b).</title>
        <authorList>
            <person name="Foote S.J."/>
            <person name="Bosse J.T."/>
            <person name="Bouevitch A.B."/>
            <person name="Langford P.R."/>
            <person name="Young N.M."/>
            <person name="Nash J.H.E."/>
        </authorList>
    </citation>
    <scope>NUCLEOTIDE SEQUENCE [LARGE SCALE GENOMIC DNA]</scope>
    <source>
        <strain>L20</strain>
    </source>
</reference>
<name>ISPH_ACTP2</name>
<keyword id="KW-0004">4Fe-4S</keyword>
<keyword id="KW-0408">Iron</keyword>
<keyword id="KW-0411">Iron-sulfur</keyword>
<keyword id="KW-0414">Isoprene biosynthesis</keyword>
<keyword id="KW-0479">Metal-binding</keyword>
<keyword id="KW-0560">Oxidoreductase</keyword>
<keyword id="KW-1185">Reference proteome</keyword>
<sequence>MNILLANPRGFCAGVDRAISIVELALEIHGAPIYVRHEVVHNRFVVDGLKAKGAVFVEELDEVPDGAIVIFSAHGVSQEVRQEAKRRGLKVFDATCPLVTKVHMQVARASKKGTKAILIGHEGHPEVIGTMGQYDNQDAGIFLVESVEDIAKLPVSSQDDLTFMTQTTLSIDDTSDVIEALKEKYPAIQGPRKNDICYATTNRQQAVRELAKQSQLVLVVGSKNSSNSNRLAELASRMGVPSKLIDGPQDIDPSWLDGVETIGITAGASAPEVLVQSVVEHLKTLGVTGVSNLEGCEENMVFEVPKELRIHEVK</sequence>
<accession>A3N2G8</accession>